<organism>
    <name type="scientific">Escherichia coli O157:H7 (strain EC4115 / EHEC)</name>
    <dbReference type="NCBI Taxonomy" id="444450"/>
    <lineage>
        <taxon>Bacteria</taxon>
        <taxon>Pseudomonadati</taxon>
        <taxon>Pseudomonadota</taxon>
        <taxon>Gammaproteobacteria</taxon>
        <taxon>Enterobacterales</taxon>
        <taxon>Enterobacteriaceae</taxon>
        <taxon>Escherichia</taxon>
    </lineage>
</organism>
<keyword id="KW-0963">Cytoplasm</keyword>
<keyword id="KW-0269">Exonuclease</keyword>
<keyword id="KW-0378">Hydrolase</keyword>
<keyword id="KW-0540">Nuclease</keyword>
<protein>
    <recommendedName>
        <fullName evidence="1">Exodeoxyribonuclease 7 large subunit</fullName>
        <ecNumber evidence="1">3.1.11.6</ecNumber>
    </recommendedName>
    <alternativeName>
        <fullName evidence="1">Exodeoxyribonuclease VII large subunit</fullName>
        <shortName evidence="1">Exonuclease VII large subunit</shortName>
    </alternativeName>
</protein>
<evidence type="ECO:0000255" key="1">
    <source>
        <dbReference type="HAMAP-Rule" id="MF_00378"/>
    </source>
</evidence>
<proteinExistence type="inferred from homology"/>
<gene>
    <name evidence="1" type="primary">xseA</name>
    <name type="ordered locus">ECH74115_3734</name>
</gene>
<sequence>MLPSQSPAIFTVSRLNQTVRLLLEHEMGQVWISGEISNFTQPASGHWYFTLKDDTAQVRCAMFRNSNRRVTFRPQHGQQVLVRANITLYEPRGDYQIIVESMQPAGEGLLQQKYEQLKAKLQAEGLFDLQYKKPLPSPAHCVGVITSKTGAALHDILHVLKRRDPSLPVIIYPTAVQGDDAPGQIVRAIELANQCNECDVLIVGRGGGSLEDLWSFNDERVARAIFASRIPVVSAVGHETDVTIADFVADLRAPTPSAAAEVVSRNQQELLRQVQSTRQRLEMAMDYYLANRTRRFTQIHHRLQQQHPQLRLARQQTMLERLQKRMSFALENQLKRAGQQQQRLTQRLNQQNPQPKIHRAQTRIQQLEYRLAETLRAQLSATRERFGNAVTHLEAVSPLSTLARGYSVTTATDGKVLKKVKQVKAGEMLTTRLEDGWVESEVKNIQPVKKSRKKVH</sequence>
<name>EX7L_ECO5E</name>
<dbReference type="EC" id="3.1.11.6" evidence="1"/>
<dbReference type="EMBL" id="CP001164">
    <property type="protein sequence ID" value="ACI39417.1"/>
    <property type="molecule type" value="Genomic_DNA"/>
</dbReference>
<dbReference type="RefSeq" id="WP_000937887.1">
    <property type="nucleotide sequence ID" value="NC_011353.1"/>
</dbReference>
<dbReference type="SMR" id="B5Z0X8"/>
<dbReference type="KEGG" id="ecf:ECH74115_3734"/>
<dbReference type="HOGENOM" id="CLU_023625_3_1_6"/>
<dbReference type="GO" id="GO:0005737">
    <property type="term" value="C:cytoplasm"/>
    <property type="evidence" value="ECO:0007669"/>
    <property type="project" value="UniProtKB-SubCell"/>
</dbReference>
<dbReference type="GO" id="GO:0009318">
    <property type="term" value="C:exodeoxyribonuclease VII complex"/>
    <property type="evidence" value="ECO:0007669"/>
    <property type="project" value="InterPro"/>
</dbReference>
<dbReference type="GO" id="GO:0008855">
    <property type="term" value="F:exodeoxyribonuclease VII activity"/>
    <property type="evidence" value="ECO:0007669"/>
    <property type="project" value="UniProtKB-UniRule"/>
</dbReference>
<dbReference type="GO" id="GO:0003676">
    <property type="term" value="F:nucleic acid binding"/>
    <property type="evidence" value="ECO:0007669"/>
    <property type="project" value="InterPro"/>
</dbReference>
<dbReference type="GO" id="GO:0006308">
    <property type="term" value="P:DNA catabolic process"/>
    <property type="evidence" value="ECO:0007669"/>
    <property type="project" value="UniProtKB-UniRule"/>
</dbReference>
<dbReference type="CDD" id="cd04489">
    <property type="entry name" value="ExoVII_LU_OBF"/>
    <property type="match status" value="1"/>
</dbReference>
<dbReference type="HAMAP" id="MF_00378">
    <property type="entry name" value="Exonuc_7_L"/>
    <property type="match status" value="1"/>
</dbReference>
<dbReference type="InterPro" id="IPR003753">
    <property type="entry name" value="Exonuc_VII_L"/>
</dbReference>
<dbReference type="InterPro" id="IPR020579">
    <property type="entry name" value="Exonuc_VII_lsu_C"/>
</dbReference>
<dbReference type="InterPro" id="IPR025824">
    <property type="entry name" value="OB-fold_nuc-bd_dom"/>
</dbReference>
<dbReference type="NCBIfam" id="TIGR00237">
    <property type="entry name" value="xseA"/>
    <property type="match status" value="1"/>
</dbReference>
<dbReference type="PANTHER" id="PTHR30008">
    <property type="entry name" value="EXODEOXYRIBONUCLEASE 7 LARGE SUBUNIT"/>
    <property type="match status" value="1"/>
</dbReference>
<dbReference type="PANTHER" id="PTHR30008:SF0">
    <property type="entry name" value="EXODEOXYRIBONUCLEASE 7 LARGE SUBUNIT"/>
    <property type="match status" value="1"/>
</dbReference>
<dbReference type="Pfam" id="PF02601">
    <property type="entry name" value="Exonuc_VII_L"/>
    <property type="match status" value="1"/>
</dbReference>
<dbReference type="Pfam" id="PF13742">
    <property type="entry name" value="tRNA_anti_2"/>
    <property type="match status" value="1"/>
</dbReference>
<reference key="1">
    <citation type="journal article" date="2011" name="Proc. Natl. Acad. Sci. U.S.A.">
        <title>Genomic anatomy of Escherichia coli O157:H7 outbreaks.</title>
        <authorList>
            <person name="Eppinger M."/>
            <person name="Mammel M.K."/>
            <person name="Leclerc J.E."/>
            <person name="Ravel J."/>
            <person name="Cebula T.A."/>
        </authorList>
    </citation>
    <scope>NUCLEOTIDE SEQUENCE [LARGE SCALE GENOMIC DNA]</scope>
    <source>
        <strain>EC4115 / EHEC</strain>
    </source>
</reference>
<comment type="function">
    <text evidence="1">Bidirectionally degrades single-stranded DNA into large acid-insoluble oligonucleotides, which are then degraded further into small acid-soluble oligonucleotides.</text>
</comment>
<comment type="catalytic activity">
    <reaction evidence="1">
        <text>Exonucleolytic cleavage in either 5'- to 3'- or 3'- to 5'-direction to yield nucleoside 5'-phosphates.</text>
        <dbReference type="EC" id="3.1.11.6"/>
    </reaction>
</comment>
<comment type="subunit">
    <text evidence="1">Heterooligomer composed of large and small subunits.</text>
</comment>
<comment type="subcellular location">
    <subcellularLocation>
        <location evidence="1">Cytoplasm</location>
    </subcellularLocation>
</comment>
<comment type="similarity">
    <text evidence="1">Belongs to the XseA family.</text>
</comment>
<accession>B5Z0X8</accession>
<feature type="chain" id="PRO_1000122054" description="Exodeoxyribonuclease 7 large subunit">
    <location>
        <begin position="1"/>
        <end position="456"/>
    </location>
</feature>